<evidence type="ECO:0000250" key="1">
    <source>
        <dbReference type="UniProtKB" id="O75746"/>
    </source>
</evidence>
<evidence type="ECO:0000250" key="2">
    <source>
        <dbReference type="UniProtKB" id="Q9UJS0"/>
    </source>
</evidence>
<evidence type="ECO:0000255" key="3">
    <source>
        <dbReference type="PROSITE-ProRule" id="PRU00282"/>
    </source>
</evidence>
<evidence type="ECO:0000255" key="4">
    <source>
        <dbReference type="PROSITE-ProRule" id="PRU00448"/>
    </source>
</evidence>
<evidence type="ECO:0000256" key="5">
    <source>
        <dbReference type="SAM" id="MobiDB-lite"/>
    </source>
</evidence>
<evidence type="ECO:0000305" key="6"/>
<name>CMC2_CAEEL</name>
<dbReference type="EMBL" id="Z72511">
    <property type="status" value="NOT_ANNOTATED_CDS"/>
    <property type="molecule type" value="Genomic_DNA"/>
</dbReference>
<dbReference type="PIR" id="T22688">
    <property type="entry name" value="T22688"/>
</dbReference>
<dbReference type="SMR" id="Q20799"/>
<dbReference type="FunCoup" id="Q20799">
    <property type="interactions" value="2172"/>
</dbReference>
<dbReference type="STRING" id="6239.F55A11.4a.1"/>
<dbReference type="PaxDb" id="6239-F55A11.4a"/>
<dbReference type="eggNOG" id="KOG0036">
    <property type="taxonomic scope" value="Eukaryota"/>
</dbReference>
<dbReference type="HOGENOM" id="CLU_015166_2_0_1"/>
<dbReference type="InParanoid" id="Q20799"/>
<dbReference type="Proteomes" id="UP000001940">
    <property type="component" value="Chromosome V"/>
</dbReference>
<dbReference type="GO" id="GO:0005743">
    <property type="term" value="C:mitochondrial inner membrane"/>
    <property type="evidence" value="ECO:0007669"/>
    <property type="project" value="UniProtKB-SubCell"/>
</dbReference>
<dbReference type="GO" id="GO:0005347">
    <property type="term" value="F:ATP transmembrane transporter activity"/>
    <property type="evidence" value="ECO:0000318"/>
    <property type="project" value="GO_Central"/>
</dbReference>
<dbReference type="GO" id="GO:0005509">
    <property type="term" value="F:calcium ion binding"/>
    <property type="evidence" value="ECO:0007669"/>
    <property type="project" value="InterPro"/>
</dbReference>
<dbReference type="GO" id="GO:0015866">
    <property type="term" value="P:ADP transport"/>
    <property type="evidence" value="ECO:0000318"/>
    <property type="project" value="GO_Central"/>
</dbReference>
<dbReference type="GO" id="GO:0015867">
    <property type="term" value="P:ATP transport"/>
    <property type="evidence" value="ECO:0000318"/>
    <property type="project" value="GO_Central"/>
</dbReference>
<dbReference type="CDD" id="cd00051">
    <property type="entry name" value="EFh"/>
    <property type="match status" value="1"/>
</dbReference>
<dbReference type="FunFam" id="1.10.238.10:FF:000369">
    <property type="entry name" value="Probable calcium-binding mitochondrial carrier CBG00135"/>
    <property type="match status" value="1"/>
</dbReference>
<dbReference type="FunFam" id="1.10.238.10:FF:000028">
    <property type="entry name" value="Putative calcium-binding mitochondrial carrier protein scamc-2"/>
    <property type="match status" value="1"/>
</dbReference>
<dbReference type="FunFam" id="1.50.40.10:FF:000003">
    <property type="entry name" value="Putative calcium-binding mitochondrial carrier protein scamc-2"/>
    <property type="match status" value="1"/>
</dbReference>
<dbReference type="Gene3D" id="1.10.238.10">
    <property type="entry name" value="EF-hand"/>
    <property type="match status" value="2"/>
</dbReference>
<dbReference type="Gene3D" id="1.50.40.10">
    <property type="entry name" value="Mitochondrial carrier domain"/>
    <property type="match status" value="1"/>
</dbReference>
<dbReference type="InterPro" id="IPR011992">
    <property type="entry name" value="EF-hand-dom_pair"/>
</dbReference>
<dbReference type="InterPro" id="IPR018247">
    <property type="entry name" value="EF_Hand_1_Ca_BS"/>
</dbReference>
<dbReference type="InterPro" id="IPR002048">
    <property type="entry name" value="EF_hand_dom"/>
</dbReference>
<dbReference type="InterPro" id="IPR002167">
    <property type="entry name" value="GDC-like"/>
</dbReference>
<dbReference type="InterPro" id="IPR002067">
    <property type="entry name" value="Mit_carrier"/>
</dbReference>
<dbReference type="InterPro" id="IPR018108">
    <property type="entry name" value="Mitochondrial_sb/sol_carrier"/>
</dbReference>
<dbReference type="InterPro" id="IPR023395">
    <property type="entry name" value="Mt_carrier_dom_sf"/>
</dbReference>
<dbReference type="PANTHER" id="PTHR24089">
    <property type="entry name" value="SOLUTE CARRIER FAMILY 25"/>
    <property type="match status" value="1"/>
</dbReference>
<dbReference type="Pfam" id="PF13499">
    <property type="entry name" value="EF-hand_7"/>
    <property type="match status" value="1"/>
</dbReference>
<dbReference type="Pfam" id="PF00153">
    <property type="entry name" value="Mito_carr"/>
    <property type="match status" value="3"/>
</dbReference>
<dbReference type="PRINTS" id="PR00928">
    <property type="entry name" value="GRAVESDC"/>
</dbReference>
<dbReference type="PRINTS" id="PR00926">
    <property type="entry name" value="MITOCARRIER"/>
</dbReference>
<dbReference type="SMART" id="SM00054">
    <property type="entry name" value="EFh"/>
    <property type="match status" value="3"/>
</dbReference>
<dbReference type="SUPFAM" id="SSF47473">
    <property type="entry name" value="EF-hand"/>
    <property type="match status" value="1"/>
</dbReference>
<dbReference type="SUPFAM" id="SSF103506">
    <property type="entry name" value="Mitochondrial carrier"/>
    <property type="match status" value="1"/>
</dbReference>
<dbReference type="PROSITE" id="PS00018">
    <property type="entry name" value="EF_HAND_1"/>
    <property type="match status" value="2"/>
</dbReference>
<dbReference type="PROSITE" id="PS50222">
    <property type="entry name" value="EF_HAND_2"/>
    <property type="match status" value="3"/>
</dbReference>
<dbReference type="PROSITE" id="PS50920">
    <property type="entry name" value="SOLCAR"/>
    <property type="match status" value="3"/>
</dbReference>
<accession>Q20799</accession>
<keyword id="KW-0106">Calcium</keyword>
<keyword id="KW-0472">Membrane</keyword>
<keyword id="KW-0479">Metal-binding</keyword>
<keyword id="KW-0496">Mitochondrion</keyword>
<keyword id="KW-0999">Mitochondrion inner membrane</keyword>
<keyword id="KW-1185">Reference proteome</keyword>
<keyword id="KW-0677">Repeat</keyword>
<keyword id="KW-0812">Transmembrane</keyword>
<keyword id="KW-1133">Transmembrane helix</keyword>
<keyword id="KW-0813">Transport</keyword>
<reference key="1">
    <citation type="journal article" date="1998" name="Science">
        <title>Genome sequence of the nematode C. elegans: a platform for investigating biology.</title>
        <authorList>
            <consortium name="The C. elegans sequencing consortium"/>
        </authorList>
    </citation>
    <scope>NUCLEOTIDE SEQUENCE [LARGE SCALE GENOMIC DNA]</scope>
    <source>
        <strain>Bristol N2</strain>
    </source>
</reference>
<sequence length="588" mass="66337">MINKNEQTESTSGAAEQKEDDEEQYVQLSSLGEYKDEVTPLLSPKHVPLVLGKVTKEAAIATHSALHGGMSEEKERQIRDIYDRLDIDNDGTIDIRDLTLALKHETPHIPANLAPVIMSKMSPDDEGRVDFYSFSSYVLENEQKLAEMFADMDRNHDGLVDVVEMKNYCKDIGVPLDDHKAQHIVNKMDQTGSASVDLKEFQEFMMLYPSSDLKDIVDFWRHNLIIDIGEDSQIPEDFSQQEMQEGIWWRHLVAGGAAGAVSRTCTAPFDRIKVYLQVNSSKTNRLGVMSCLKLLHAEGGIKSFWRGNGINVIKIAPESAIKFMCYDQLKRLIQKKKGNEEISTFERLCAGSAAGAISQSTIYPMEVMKTRLALRKTGQLDRGIIHFAHKMYTKEGIRCFYKGYLPNLIGIIPYAGIDLAIYETLKRTYVRYYETNSSEPGVLALLACGTCSSTCGQLSSYPFALVRTRLQALSITRYSPQPDTMFGQFKYILQNEGVTGFYRGITPNFLKVIPAVSISYVVYEKVRTGLGVPVCSRGGLEDIHQFLPCSIHSIIQFFFFPRTFLLTISGRSLRVKPVWRSHFSKFNK</sequence>
<gene>
    <name type="ORF">F55A11.4</name>
</gene>
<proteinExistence type="uncertain"/>
<comment type="function">
    <text evidence="2">Mitochondrial and calcium-binding carrier that catalyzes the calcium-dependent exchange of cytoplasmic glutamate with mitochondrial aspartate across the mitochondrial inner membrane.</text>
</comment>
<comment type="subunit">
    <text evidence="2">Homodimer (via N-terminus).</text>
</comment>
<comment type="subcellular location">
    <subcellularLocation>
        <location evidence="2">Mitochondrion inner membrane</location>
        <topology evidence="2">Multi-pass membrane protein</topology>
    </subcellularLocation>
</comment>
<comment type="similarity">
    <text evidence="6">Belongs to the mitochondrial carrier (TC 2.A.29) family.</text>
</comment>
<comment type="caution">
    <text evidence="6">Could be the product of a pseudogene.</text>
</comment>
<feature type="chain" id="PRO_0000090604" description="Putative calcium-binding mitochondrial carrier F55A11.4">
    <location>
        <begin position="1"/>
        <end position="588"/>
    </location>
</feature>
<feature type="transmembrane region" description="Helical; Name=1" evidence="1">
    <location>
        <begin position="252"/>
        <end position="269"/>
    </location>
</feature>
<feature type="transmembrane region" description="Helical; Name=2" evidence="1">
    <location>
        <begin position="307"/>
        <end position="326"/>
    </location>
</feature>
<feature type="transmembrane region" description="Helical; Name=3" evidence="1">
    <location>
        <begin position="352"/>
        <end position="365"/>
    </location>
</feature>
<feature type="transmembrane region" description="Helical; Name=4" evidence="1">
    <location>
        <begin position="403"/>
        <end position="422"/>
    </location>
</feature>
<feature type="transmembrane region" description="Helical; Name=5" evidence="1">
    <location>
        <begin position="446"/>
        <end position="463"/>
    </location>
</feature>
<feature type="transmembrane region" description="Helical; Name=6" evidence="1">
    <location>
        <begin position="504"/>
        <end position="523"/>
    </location>
</feature>
<feature type="domain" description="EF-hand 1" evidence="4">
    <location>
        <begin position="73"/>
        <end position="108"/>
    </location>
</feature>
<feature type="domain" description="EF-hand 2" evidence="6">
    <location>
        <begin position="109"/>
        <end position="139"/>
    </location>
</feature>
<feature type="domain" description="EF-hand 3" evidence="4">
    <location>
        <begin position="140"/>
        <end position="175"/>
    </location>
</feature>
<feature type="domain" description="EF-hand 4" evidence="4">
    <location>
        <begin position="176"/>
        <end position="211"/>
    </location>
</feature>
<feature type="repeat" description="Solcar 1" evidence="3">
    <location>
        <begin position="246"/>
        <end position="332"/>
    </location>
</feature>
<feature type="repeat" description="Solcar 2" evidence="3">
    <location>
        <begin position="342"/>
        <end position="428"/>
    </location>
</feature>
<feature type="repeat" description="Solcar 3" evidence="3">
    <location>
        <begin position="440"/>
        <end position="529"/>
    </location>
</feature>
<feature type="region of interest" description="Disordered" evidence="5">
    <location>
        <begin position="1"/>
        <end position="25"/>
    </location>
</feature>
<feature type="compositionally biased region" description="Polar residues" evidence="5">
    <location>
        <begin position="1"/>
        <end position="14"/>
    </location>
</feature>
<feature type="binding site" evidence="4">
    <location>
        <position position="86"/>
    </location>
    <ligand>
        <name>Ca(2+)</name>
        <dbReference type="ChEBI" id="CHEBI:29108"/>
        <label>1</label>
    </ligand>
</feature>
<feature type="binding site" evidence="4">
    <location>
        <position position="88"/>
    </location>
    <ligand>
        <name>Ca(2+)</name>
        <dbReference type="ChEBI" id="CHEBI:29108"/>
        <label>1</label>
    </ligand>
</feature>
<feature type="binding site" evidence="4">
    <location>
        <position position="90"/>
    </location>
    <ligand>
        <name>Ca(2+)</name>
        <dbReference type="ChEBI" id="CHEBI:29108"/>
        <label>1</label>
    </ligand>
</feature>
<feature type="binding site" evidence="4">
    <location>
        <position position="92"/>
    </location>
    <ligand>
        <name>Ca(2+)</name>
        <dbReference type="ChEBI" id="CHEBI:29108"/>
        <label>1</label>
    </ligand>
</feature>
<feature type="binding site" evidence="4">
    <location>
        <position position="97"/>
    </location>
    <ligand>
        <name>Ca(2+)</name>
        <dbReference type="ChEBI" id="CHEBI:29108"/>
        <label>1</label>
    </ligand>
</feature>
<feature type="binding site" evidence="4">
    <location>
        <position position="153"/>
    </location>
    <ligand>
        <name>Ca(2+)</name>
        <dbReference type="ChEBI" id="CHEBI:29108"/>
        <label>2</label>
    </ligand>
</feature>
<feature type="binding site" evidence="4">
    <location>
        <position position="155"/>
    </location>
    <ligand>
        <name>Ca(2+)</name>
        <dbReference type="ChEBI" id="CHEBI:29108"/>
        <label>2</label>
    </ligand>
</feature>
<feature type="binding site" evidence="4">
    <location>
        <position position="157"/>
    </location>
    <ligand>
        <name>Ca(2+)</name>
        <dbReference type="ChEBI" id="CHEBI:29108"/>
        <label>2</label>
    </ligand>
</feature>
<feature type="binding site" evidence="4">
    <location>
        <position position="164"/>
    </location>
    <ligand>
        <name>Ca(2+)</name>
        <dbReference type="ChEBI" id="CHEBI:29108"/>
        <label>2</label>
    </ligand>
</feature>
<organism>
    <name type="scientific">Caenorhabditis elegans</name>
    <dbReference type="NCBI Taxonomy" id="6239"/>
    <lineage>
        <taxon>Eukaryota</taxon>
        <taxon>Metazoa</taxon>
        <taxon>Ecdysozoa</taxon>
        <taxon>Nematoda</taxon>
        <taxon>Chromadorea</taxon>
        <taxon>Rhabditida</taxon>
        <taxon>Rhabditina</taxon>
        <taxon>Rhabditomorpha</taxon>
        <taxon>Rhabditoidea</taxon>
        <taxon>Rhabditidae</taxon>
        <taxon>Peloderinae</taxon>
        <taxon>Caenorhabditis</taxon>
    </lineage>
</organism>
<protein>
    <recommendedName>
        <fullName>Putative calcium-binding mitochondrial carrier F55A11.4</fullName>
    </recommendedName>
</protein>